<dbReference type="EMBL" id="CP000613">
    <property type="protein sequence ID" value="ACI99460.1"/>
    <property type="molecule type" value="Genomic_DNA"/>
</dbReference>
<dbReference type="RefSeq" id="WP_012567245.1">
    <property type="nucleotide sequence ID" value="NC_011420.2"/>
</dbReference>
<dbReference type="SMR" id="B6ITS4"/>
<dbReference type="STRING" id="414684.RC1_2070"/>
<dbReference type="KEGG" id="rce:RC1_2070"/>
<dbReference type="eggNOG" id="COG0828">
    <property type="taxonomic scope" value="Bacteria"/>
</dbReference>
<dbReference type="HOGENOM" id="CLU_159258_0_1_5"/>
<dbReference type="OrthoDB" id="9811907at2"/>
<dbReference type="Proteomes" id="UP000001591">
    <property type="component" value="Chromosome"/>
</dbReference>
<dbReference type="GO" id="GO:1990904">
    <property type="term" value="C:ribonucleoprotein complex"/>
    <property type="evidence" value="ECO:0007669"/>
    <property type="project" value="UniProtKB-KW"/>
</dbReference>
<dbReference type="GO" id="GO:0005840">
    <property type="term" value="C:ribosome"/>
    <property type="evidence" value="ECO:0007669"/>
    <property type="project" value="UniProtKB-KW"/>
</dbReference>
<dbReference type="GO" id="GO:0003735">
    <property type="term" value="F:structural constituent of ribosome"/>
    <property type="evidence" value="ECO:0007669"/>
    <property type="project" value="InterPro"/>
</dbReference>
<dbReference type="GO" id="GO:0006412">
    <property type="term" value="P:translation"/>
    <property type="evidence" value="ECO:0007669"/>
    <property type="project" value="UniProtKB-UniRule"/>
</dbReference>
<dbReference type="Gene3D" id="1.20.5.1150">
    <property type="entry name" value="Ribosomal protein S8"/>
    <property type="match status" value="1"/>
</dbReference>
<dbReference type="HAMAP" id="MF_00358">
    <property type="entry name" value="Ribosomal_bS21"/>
    <property type="match status" value="1"/>
</dbReference>
<dbReference type="InterPro" id="IPR001911">
    <property type="entry name" value="Ribosomal_bS21"/>
</dbReference>
<dbReference type="InterPro" id="IPR018278">
    <property type="entry name" value="Ribosomal_bS21_CS"/>
</dbReference>
<dbReference type="InterPro" id="IPR038380">
    <property type="entry name" value="Ribosomal_bS21_sf"/>
</dbReference>
<dbReference type="NCBIfam" id="TIGR00030">
    <property type="entry name" value="S21p"/>
    <property type="match status" value="1"/>
</dbReference>
<dbReference type="PANTHER" id="PTHR21109">
    <property type="entry name" value="MITOCHONDRIAL 28S RIBOSOMAL PROTEIN S21"/>
    <property type="match status" value="1"/>
</dbReference>
<dbReference type="PANTHER" id="PTHR21109:SF0">
    <property type="entry name" value="SMALL RIBOSOMAL SUBUNIT PROTEIN BS21M"/>
    <property type="match status" value="1"/>
</dbReference>
<dbReference type="Pfam" id="PF01165">
    <property type="entry name" value="Ribosomal_S21"/>
    <property type="match status" value="1"/>
</dbReference>
<dbReference type="PRINTS" id="PR00976">
    <property type="entry name" value="RIBOSOMALS21"/>
</dbReference>
<dbReference type="PROSITE" id="PS01181">
    <property type="entry name" value="RIBOSOMAL_S21"/>
    <property type="match status" value="1"/>
</dbReference>
<name>RS21_RHOCS</name>
<sequence length="67" mass="8256">MQVLVRDNNVDQALRALKKKMQREGIFREMKLRRNYEKPSEKRAREKAEAIRRARKLLRKRLEREGY</sequence>
<organism>
    <name type="scientific">Rhodospirillum centenum (strain ATCC 51521 / SW)</name>
    <dbReference type="NCBI Taxonomy" id="414684"/>
    <lineage>
        <taxon>Bacteria</taxon>
        <taxon>Pseudomonadati</taxon>
        <taxon>Pseudomonadota</taxon>
        <taxon>Alphaproteobacteria</taxon>
        <taxon>Rhodospirillales</taxon>
        <taxon>Rhodospirillaceae</taxon>
        <taxon>Rhodospirillum</taxon>
    </lineage>
</organism>
<accession>B6ITS4</accession>
<gene>
    <name evidence="1" type="primary">rpsU</name>
    <name type="ordered locus">RC1_2070</name>
</gene>
<protein>
    <recommendedName>
        <fullName evidence="1">Small ribosomal subunit protein bS21</fullName>
    </recommendedName>
    <alternativeName>
        <fullName evidence="2">30S ribosomal protein S21</fullName>
    </alternativeName>
</protein>
<keyword id="KW-1185">Reference proteome</keyword>
<keyword id="KW-0687">Ribonucleoprotein</keyword>
<keyword id="KW-0689">Ribosomal protein</keyword>
<feature type="chain" id="PRO_1000120653" description="Small ribosomal subunit protein bS21">
    <location>
        <begin position="1"/>
        <end position="67"/>
    </location>
</feature>
<evidence type="ECO:0000255" key="1">
    <source>
        <dbReference type="HAMAP-Rule" id="MF_00358"/>
    </source>
</evidence>
<evidence type="ECO:0000305" key="2"/>
<comment type="similarity">
    <text evidence="1">Belongs to the bacterial ribosomal protein bS21 family.</text>
</comment>
<reference key="1">
    <citation type="submission" date="2007-03" db="EMBL/GenBank/DDBJ databases">
        <title>Genome sequence of Rhodospirillum centenum.</title>
        <authorList>
            <person name="Touchman J.W."/>
            <person name="Bauer C."/>
            <person name="Blankenship R.E."/>
        </authorList>
    </citation>
    <scope>NUCLEOTIDE SEQUENCE [LARGE SCALE GENOMIC DNA]</scope>
    <source>
        <strain>ATCC 51521 / SW</strain>
    </source>
</reference>
<proteinExistence type="inferred from homology"/>